<organism>
    <name type="scientific">Amia calva</name>
    <name type="common">Bowfin</name>
    <dbReference type="NCBI Taxonomy" id="7924"/>
    <lineage>
        <taxon>Eukaryota</taxon>
        <taxon>Metazoa</taxon>
        <taxon>Chordata</taxon>
        <taxon>Craniata</taxon>
        <taxon>Vertebrata</taxon>
        <taxon>Euteleostomi</taxon>
        <taxon>Actinopterygii</taxon>
        <taxon>Neopterygii</taxon>
        <taxon>Holostei</taxon>
        <taxon>Amiiformes</taxon>
        <taxon>Amiidae</taxon>
        <taxon>Amia</taxon>
    </lineage>
</organism>
<proteinExistence type="inferred from homology"/>
<name>URAD_AMICA</name>
<accession>Q0ZDF7</accession>
<reference key="1">
    <citation type="journal article" date="2006" name="Proc. Natl. Acad. Sci. U.S.A.">
        <title>Breakup of a homeobox cluster after genome duplication in teleosts.</title>
        <authorList>
            <person name="Mulley J.F."/>
            <person name="Chiu C.-H."/>
            <person name="Holland P.W.H."/>
        </authorList>
    </citation>
    <scope>NUCLEOTIDE SEQUENCE [GENOMIC DNA]</scope>
</reference>
<keyword id="KW-0210">Decarboxylase</keyword>
<keyword id="KW-0456">Lyase</keyword>
<keyword id="KW-0576">Peroxisome</keyword>
<keyword id="KW-0659">Purine metabolism</keyword>
<gene>
    <name type="primary">urad</name>
    <name type="synonym">prhoxnb</name>
</gene>
<feature type="chain" id="PRO_0000315242" description="2-oxo-4-hydroxy-4-carboxy-5-ureidoimidazoline decarboxylase">
    <location>
        <begin position="1"/>
        <end position="175"/>
    </location>
</feature>
<feature type="short sequence motif" description="Microbody targeting signal" evidence="2">
    <location>
        <begin position="173"/>
        <end position="175"/>
    </location>
</feature>
<feature type="active site" description="Proton donor" evidence="1">
    <location>
        <position position="67"/>
    </location>
</feature>
<feature type="binding site" evidence="1">
    <location>
        <position position="68"/>
    </location>
    <ligand>
        <name>substrate</name>
    </ligand>
</feature>
<feature type="binding site" evidence="1">
    <location>
        <begin position="84"/>
        <end position="88"/>
    </location>
    <ligand>
        <name>substrate</name>
    </ligand>
</feature>
<feature type="binding site" evidence="1">
    <location>
        <begin position="119"/>
        <end position="123"/>
    </location>
    <ligand>
        <name>substrate</name>
    </ligand>
</feature>
<comment type="function">
    <text evidence="1">Catalyzes the stereoselective decarboxylation of 2-oxo-4-hydroxy-4-carboxy-5-ureidoimidazoline (OHCU) to (S)-allantoin.</text>
</comment>
<comment type="catalytic activity">
    <reaction>
        <text>5-hydroxy-2-oxo-4-ureido-2,5-dihydro-1H-imidazole-5-carboxylate + H(+) = (S)-allantoin + CO2</text>
        <dbReference type="Rhea" id="RHEA:26301"/>
        <dbReference type="ChEBI" id="CHEBI:15378"/>
        <dbReference type="ChEBI" id="CHEBI:15678"/>
        <dbReference type="ChEBI" id="CHEBI:16526"/>
        <dbReference type="ChEBI" id="CHEBI:58639"/>
        <dbReference type="EC" id="4.1.1.97"/>
    </reaction>
</comment>
<comment type="pathway">
    <text>Purine metabolism; urate degradation; (S)-allantoin from urate: step 3/3.</text>
</comment>
<comment type="subunit">
    <text evidence="1">Homodimer.</text>
</comment>
<comment type="subcellular location">
    <subcellularLocation>
        <location evidence="3">Peroxisome</location>
    </subcellularLocation>
</comment>
<comment type="similarity">
    <text evidence="3">Belongs to the OHCU decarboxylase family.</text>
</comment>
<evidence type="ECO:0000250" key="1"/>
<evidence type="ECO:0000255" key="2"/>
<evidence type="ECO:0000305" key="3"/>
<protein>
    <recommendedName>
        <fullName>2-oxo-4-hydroxy-4-carboxy-5-ureidoimidazoline decarboxylase</fullName>
        <shortName>OHCU decarboxylase</shortName>
        <ecNumber>4.1.1.97</ecNumber>
    </recommendedName>
    <alternativeName>
        <fullName>Parahox neighbor</fullName>
    </alternativeName>
    <alternativeName>
        <fullName>Ureidoimidazoline (2-oxo-4-hydroxy-4-carboxy-5-) decarboxylase</fullName>
    </alternativeName>
</protein>
<dbReference type="EC" id="4.1.1.97"/>
<dbReference type="EMBL" id="DQ504303">
    <property type="protein sequence ID" value="ABF51667.1"/>
    <property type="molecule type" value="Genomic_DNA"/>
</dbReference>
<dbReference type="SMR" id="Q0ZDF7"/>
<dbReference type="UniPathway" id="UPA00394">
    <property type="reaction ID" value="UER00652"/>
</dbReference>
<dbReference type="GO" id="GO:0005777">
    <property type="term" value="C:peroxisome"/>
    <property type="evidence" value="ECO:0007669"/>
    <property type="project" value="UniProtKB-SubCell"/>
</dbReference>
<dbReference type="GO" id="GO:0051997">
    <property type="term" value="F:2-oxo-4-hydroxy-4-carboxy-5-ureidoimidazoline decarboxylase activity"/>
    <property type="evidence" value="ECO:0007669"/>
    <property type="project" value="UniProtKB-EC"/>
</dbReference>
<dbReference type="GO" id="GO:0000255">
    <property type="term" value="P:allantoin metabolic process"/>
    <property type="evidence" value="ECO:0007669"/>
    <property type="project" value="InterPro"/>
</dbReference>
<dbReference type="GO" id="GO:0006144">
    <property type="term" value="P:purine nucleobase metabolic process"/>
    <property type="evidence" value="ECO:0007669"/>
    <property type="project" value="UniProtKB-KW"/>
</dbReference>
<dbReference type="GO" id="GO:0019628">
    <property type="term" value="P:urate catabolic process"/>
    <property type="evidence" value="ECO:0007669"/>
    <property type="project" value="UniProtKB-UniPathway"/>
</dbReference>
<dbReference type="FunFam" id="1.10.3330.10:FF:000001">
    <property type="entry name" value="2-oxo-4-hydroxy-4-carboxy-5-ureidoimidazoline decarboxylase"/>
    <property type="match status" value="1"/>
</dbReference>
<dbReference type="Gene3D" id="1.10.3330.10">
    <property type="entry name" value="Oxo-4-hydroxy-4-carboxy-5-ureidoimidazoline decarboxylase"/>
    <property type="match status" value="1"/>
</dbReference>
<dbReference type="InterPro" id="IPR018020">
    <property type="entry name" value="OHCU_decarboxylase"/>
</dbReference>
<dbReference type="InterPro" id="IPR017580">
    <property type="entry name" value="OHCU_decarboxylase-1"/>
</dbReference>
<dbReference type="InterPro" id="IPR036778">
    <property type="entry name" value="OHCU_decarboxylase_sf"/>
</dbReference>
<dbReference type="NCBIfam" id="TIGR03164">
    <property type="entry name" value="UHCUDC"/>
    <property type="match status" value="1"/>
</dbReference>
<dbReference type="PANTHER" id="PTHR43466">
    <property type="entry name" value="2-OXO-4-HYDROXY-4-CARBOXY-5-UREIDOIMIDAZOLINE DECARBOXYLASE-RELATED"/>
    <property type="match status" value="1"/>
</dbReference>
<dbReference type="PANTHER" id="PTHR43466:SF1">
    <property type="entry name" value="2-OXO-4-HYDROXY-4-CARBOXY-5-UREIDOIMIDAZOLINE DECARBOXYLASE-RELATED"/>
    <property type="match status" value="1"/>
</dbReference>
<dbReference type="Pfam" id="PF09349">
    <property type="entry name" value="OHCU_decarbox"/>
    <property type="match status" value="1"/>
</dbReference>
<dbReference type="SUPFAM" id="SSF158694">
    <property type="entry name" value="UraD-Like"/>
    <property type="match status" value="1"/>
</dbReference>
<sequence length="175" mass="19501">MDMRQVNSLSYEEFVETFGNVVERCPVVAAAVWSGRPFANSHDLEASIGEFIDSLPVAGQEGIVRCHPDLAGRDLKRGALTAESRGEQTQAGLTLLDAGDAARMNRLNAQYKERFGFPFVICARMNNKEEILLRLAERLGNEPAQERQCAIEEVKKICQLRLQDIIQCPATHTKL</sequence>